<dbReference type="EC" id="2.8.1.13" evidence="1"/>
<dbReference type="EMBL" id="AE015927">
    <property type="protein sequence ID" value="AAO36015.1"/>
    <property type="molecule type" value="Genomic_DNA"/>
</dbReference>
<dbReference type="RefSeq" id="WP_011099675.1">
    <property type="nucleotide sequence ID" value="NC_004557.1"/>
</dbReference>
<dbReference type="SMR" id="Q894S7"/>
<dbReference type="STRING" id="212717.CTC_01457"/>
<dbReference type="GeneID" id="24253876"/>
<dbReference type="KEGG" id="ctc:CTC_01457"/>
<dbReference type="HOGENOM" id="CLU_035188_0_0_9"/>
<dbReference type="Proteomes" id="UP000001412">
    <property type="component" value="Chromosome"/>
</dbReference>
<dbReference type="GO" id="GO:0005737">
    <property type="term" value="C:cytoplasm"/>
    <property type="evidence" value="ECO:0007669"/>
    <property type="project" value="UniProtKB-SubCell"/>
</dbReference>
<dbReference type="GO" id="GO:0005524">
    <property type="term" value="F:ATP binding"/>
    <property type="evidence" value="ECO:0007669"/>
    <property type="project" value="UniProtKB-KW"/>
</dbReference>
<dbReference type="GO" id="GO:0000049">
    <property type="term" value="F:tRNA binding"/>
    <property type="evidence" value="ECO:0007669"/>
    <property type="project" value="UniProtKB-KW"/>
</dbReference>
<dbReference type="GO" id="GO:0103016">
    <property type="term" value="F:tRNA-uridine 2-sulfurtransferase activity"/>
    <property type="evidence" value="ECO:0007669"/>
    <property type="project" value="UniProtKB-EC"/>
</dbReference>
<dbReference type="GO" id="GO:0002143">
    <property type="term" value="P:tRNA wobble position uridine thiolation"/>
    <property type="evidence" value="ECO:0007669"/>
    <property type="project" value="TreeGrafter"/>
</dbReference>
<dbReference type="CDD" id="cd01998">
    <property type="entry name" value="MnmA_TRMU-like"/>
    <property type="match status" value="1"/>
</dbReference>
<dbReference type="FunFam" id="2.30.30.280:FF:000001">
    <property type="entry name" value="tRNA-specific 2-thiouridylase MnmA"/>
    <property type="match status" value="1"/>
</dbReference>
<dbReference type="FunFam" id="2.40.30.10:FF:000023">
    <property type="entry name" value="tRNA-specific 2-thiouridylase MnmA"/>
    <property type="match status" value="1"/>
</dbReference>
<dbReference type="FunFam" id="3.40.50.620:FF:000115">
    <property type="entry name" value="tRNA-specific 2-thiouridylase MnmA"/>
    <property type="match status" value="1"/>
</dbReference>
<dbReference type="Gene3D" id="2.30.30.280">
    <property type="entry name" value="Adenine nucleotide alpha hydrolases-like domains"/>
    <property type="match status" value="1"/>
</dbReference>
<dbReference type="Gene3D" id="3.40.50.620">
    <property type="entry name" value="HUPs"/>
    <property type="match status" value="1"/>
</dbReference>
<dbReference type="Gene3D" id="2.40.30.10">
    <property type="entry name" value="Translation factors"/>
    <property type="match status" value="1"/>
</dbReference>
<dbReference type="HAMAP" id="MF_00144">
    <property type="entry name" value="tRNA_thiouridyl_MnmA"/>
    <property type="match status" value="1"/>
</dbReference>
<dbReference type="InterPro" id="IPR004506">
    <property type="entry name" value="MnmA-like"/>
</dbReference>
<dbReference type="InterPro" id="IPR046885">
    <property type="entry name" value="MnmA-like_C"/>
</dbReference>
<dbReference type="InterPro" id="IPR046884">
    <property type="entry name" value="MnmA-like_central"/>
</dbReference>
<dbReference type="InterPro" id="IPR023382">
    <property type="entry name" value="MnmA-like_central_sf"/>
</dbReference>
<dbReference type="InterPro" id="IPR014729">
    <property type="entry name" value="Rossmann-like_a/b/a_fold"/>
</dbReference>
<dbReference type="NCBIfam" id="NF001138">
    <property type="entry name" value="PRK00143.1"/>
    <property type="match status" value="1"/>
</dbReference>
<dbReference type="NCBIfam" id="TIGR00420">
    <property type="entry name" value="trmU"/>
    <property type="match status" value="1"/>
</dbReference>
<dbReference type="PANTHER" id="PTHR11933:SF5">
    <property type="entry name" value="MITOCHONDRIAL TRNA-SPECIFIC 2-THIOURIDYLASE 1"/>
    <property type="match status" value="1"/>
</dbReference>
<dbReference type="PANTHER" id="PTHR11933">
    <property type="entry name" value="TRNA 5-METHYLAMINOMETHYL-2-THIOURIDYLATE -METHYLTRANSFERASE"/>
    <property type="match status" value="1"/>
</dbReference>
<dbReference type="Pfam" id="PF03054">
    <property type="entry name" value="tRNA_Me_trans"/>
    <property type="match status" value="1"/>
</dbReference>
<dbReference type="Pfam" id="PF20258">
    <property type="entry name" value="tRNA_Me_trans_C"/>
    <property type="match status" value="1"/>
</dbReference>
<dbReference type="Pfam" id="PF20259">
    <property type="entry name" value="tRNA_Me_trans_M"/>
    <property type="match status" value="1"/>
</dbReference>
<dbReference type="SUPFAM" id="SSF52402">
    <property type="entry name" value="Adenine nucleotide alpha hydrolases-like"/>
    <property type="match status" value="1"/>
</dbReference>
<keyword id="KW-0067">ATP-binding</keyword>
<keyword id="KW-0963">Cytoplasm</keyword>
<keyword id="KW-1015">Disulfide bond</keyword>
<keyword id="KW-0547">Nucleotide-binding</keyword>
<keyword id="KW-1185">Reference proteome</keyword>
<keyword id="KW-0694">RNA-binding</keyword>
<keyword id="KW-0808">Transferase</keyword>
<keyword id="KW-0819">tRNA processing</keyword>
<keyword id="KW-0820">tRNA-binding</keyword>
<gene>
    <name evidence="1" type="primary">mnmA2</name>
    <name type="ordered locus">CTC_01457</name>
</gene>
<feature type="chain" id="PRO_0000349600" description="tRNA-specific 2-thiouridylase MnmA 2">
    <location>
        <begin position="1"/>
        <end position="358"/>
    </location>
</feature>
<feature type="region of interest" description="Interaction with tRNA" evidence="1">
    <location>
        <begin position="152"/>
        <end position="154"/>
    </location>
</feature>
<feature type="region of interest" description="Interaction with tRNA" evidence="1">
    <location>
        <begin position="308"/>
        <end position="309"/>
    </location>
</feature>
<feature type="active site" description="Nucleophile" evidence="1">
    <location>
        <position position="106"/>
    </location>
</feature>
<feature type="active site" description="Cysteine persulfide intermediate" evidence="1">
    <location>
        <position position="202"/>
    </location>
</feature>
<feature type="binding site" evidence="1">
    <location>
        <begin position="11"/>
        <end position="18"/>
    </location>
    <ligand>
        <name>ATP</name>
        <dbReference type="ChEBI" id="CHEBI:30616"/>
    </ligand>
</feature>
<feature type="binding site" evidence="1">
    <location>
        <position position="37"/>
    </location>
    <ligand>
        <name>ATP</name>
        <dbReference type="ChEBI" id="CHEBI:30616"/>
    </ligand>
</feature>
<feature type="binding site" evidence="1">
    <location>
        <position position="130"/>
    </location>
    <ligand>
        <name>ATP</name>
        <dbReference type="ChEBI" id="CHEBI:30616"/>
    </ligand>
</feature>
<feature type="site" description="Interaction with tRNA" evidence="1">
    <location>
        <position position="131"/>
    </location>
</feature>
<feature type="site" description="Interaction with tRNA" evidence="1">
    <location>
        <position position="341"/>
    </location>
</feature>
<feature type="disulfide bond" description="Alternate" evidence="1">
    <location>
        <begin position="106"/>
        <end position="202"/>
    </location>
</feature>
<organism>
    <name type="scientific">Clostridium tetani (strain Massachusetts / E88)</name>
    <dbReference type="NCBI Taxonomy" id="212717"/>
    <lineage>
        <taxon>Bacteria</taxon>
        <taxon>Bacillati</taxon>
        <taxon>Bacillota</taxon>
        <taxon>Clostridia</taxon>
        <taxon>Eubacteriales</taxon>
        <taxon>Clostridiaceae</taxon>
        <taxon>Clostridium</taxon>
    </lineage>
</organism>
<protein>
    <recommendedName>
        <fullName evidence="1">tRNA-specific 2-thiouridylase MnmA 2</fullName>
        <ecNumber evidence="1">2.8.1.13</ecNumber>
    </recommendedName>
</protein>
<comment type="function">
    <text evidence="1">Catalyzes the 2-thiolation of uridine at the wobble position (U34) of tRNA, leading to the formation of s(2)U34.</text>
</comment>
<comment type="catalytic activity">
    <reaction evidence="1">
        <text>S-sulfanyl-L-cysteinyl-[protein] + uridine(34) in tRNA + AH2 + ATP = 2-thiouridine(34) in tRNA + L-cysteinyl-[protein] + A + AMP + diphosphate + H(+)</text>
        <dbReference type="Rhea" id="RHEA:47032"/>
        <dbReference type="Rhea" id="RHEA-COMP:10131"/>
        <dbReference type="Rhea" id="RHEA-COMP:11726"/>
        <dbReference type="Rhea" id="RHEA-COMP:11727"/>
        <dbReference type="Rhea" id="RHEA-COMP:11728"/>
        <dbReference type="ChEBI" id="CHEBI:13193"/>
        <dbReference type="ChEBI" id="CHEBI:15378"/>
        <dbReference type="ChEBI" id="CHEBI:17499"/>
        <dbReference type="ChEBI" id="CHEBI:29950"/>
        <dbReference type="ChEBI" id="CHEBI:30616"/>
        <dbReference type="ChEBI" id="CHEBI:33019"/>
        <dbReference type="ChEBI" id="CHEBI:61963"/>
        <dbReference type="ChEBI" id="CHEBI:65315"/>
        <dbReference type="ChEBI" id="CHEBI:87170"/>
        <dbReference type="ChEBI" id="CHEBI:456215"/>
        <dbReference type="EC" id="2.8.1.13"/>
    </reaction>
</comment>
<comment type="subcellular location">
    <subcellularLocation>
        <location evidence="1">Cytoplasm</location>
    </subcellularLocation>
</comment>
<comment type="similarity">
    <text evidence="1">Belongs to the MnmA/TRMU family.</text>
</comment>
<accession>Q894S7</accession>
<name>MNMA2_CLOTE</name>
<sequence>MNILKKKVLVGMSGGVDSSVAAYLLKEQGYEVIGATMQIWQDDKEFIEREGGCCSLSAVADARRVANKIGIPFYVMNFKDAFKKNVIDYFVDEYMEGRTPNPCVACNKFIKFSSFLDKAMTLGIDYVATGHYAIIEKQNNRYIVRKSEDDKKDQTYALYNLTQFQLERTLMPCGRYKKSEIREIAKKIGLRVHNKKDSQEICFIPDNDHGKYIKNRFPSKVRQGNFVDKSGNVLGTHKGIVYYTIGQRKGLDIALGKPMYVVDINPFRNEVVLGNLDDLLNTELIAKDVNYIPFDNLKEPMEVEAKIRYSQIPSKAVITPMENDKVKVNFTEKQRAITKGQSVVFYKGDLLIGGGIIE</sequence>
<proteinExistence type="inferred from homology"/>
<reference key="1">
    <citation type="journal article" date="2003" name="Proc. Natl. Acad. Sci. U.S.A.">
        <title>The genome sequence of Clostridium tetani, the causative agent of tetanus disease.</title>
        <authorList>
            <person name="Brueggemann H."/>
            <person name="Baeumer S."/>
            <person name="Fricke W.F."/>
            <person name="Wiezer A."/>
            <person name="Liesegang H."/>
            <person name="Decker I."/>
            <person name="Herzberg C."/>
            <person name="Martinez-Arias R."/>
            <person name="Merkl R."/>
            <person name="Henne A."/>
            <person name="Gottschalk G."/>
        </authorList>
    </citation>
    <scope>NUCLEOTIDE SEQUENCE [LARGE SCALE GENOMIC DNA]</scope>
    <source>
        <strain>Massachusetts / E88</strain>
    </source>
</reference>
<evidence type="ECO:0000255" key="1">
    <source>
        <dbReference type="HAMAP-Rule" id="MF_00144"/>
    </source>
</evidence>